<evidence type="ECO:0000255" key="1">
    <source>
        <dbReference type="HAMAP-Rule" id="MF_00087"/>
    </source>
</evidence>
<feature type="chain" id="PRO_1000004640" description="Glutamyl-tRNA reductase">
    <location>
        <begin position="1"/>
        <end position="382"/>
    </location>
</feature>
<feature type="active site" description="Nucleophile" evidence="1">
    <location>
        <position position="39"/>
    </location>
</feature>
<feature type="binding site" evidence="1">
    <location>
        <begin position="38"/>
        <end position="41"/>
    </location>
    <ligand>
        <name>substrate</name>
    </ligand>
</feature>
<feature type="binding site" evidence="1">
    <location>
        <position position="85"/>
    </location>
    <ligand>
        <name>substrate</name>
    </ligand>
</feature>
<feature type="binding site" evidence="1">
    <location>
        <begin position="90"/>
        <end position="92"/>
    </location>
    <ligand>
        <name>substrate</name>
    </ligand>
</feature>
<feature type="binding site" evidence="1">
    <location>
        <position position="96"/>
    </location>
    <ligand>
        <name>substrate</name>
    </ligand>
</feature>
<feature type="binding site" evidence="1">
    <location>
        <begin position="164"/>
        <end position="169"/>
    </location>
    <ligand>
        <name>NADP(+)</name>
        <dbReference type="ChEBI" id="CHEBI:58349"/>
    </ligand>
</feature>
<feature type="site" description="Important for activity" evidence="1">
    <location>
        <position position="75"/>
    </location>
</feature>
<gene>
    <name evidence="1" type="primary">hemA</name>
    <name type="ordered locus">MmarC7_1087</name>
</gene>
<name>HEM1_METM7</name>
<comment type="function">
    <text evidence="1">Catalyzes the NADPH-dependent reduction of glutamyl-tRNA(Glu) to glutamate 1-semialdehyde (GSA).</text>
</comment>
<comment type="catalytic activity">
    <reaction evidence="1">
        <text>(S)-4-amino-5-oxopentanoate + tRNA(Glu) + NADP(+) = L-glutamyl-tRNA(Glu) + NADPH + H(+)</text>
        <dbReference type="Rhea" id="RHEA:12344"/>
        <dbReference type="Rhea" id="RHEA-COMP:9663"/>
        <dbReference type="Rhea" id="RHEA-COMP:9680"/>
        <dbReference type="ChEBI" id="CHEBI:15378"/>
        <dbReference type="ChEBI" id="CHEBI:57501"/>
        <dbReference type="ChEBI" id="CHEBI:57783"/>
        <dbReference type="ChEBI" id="CHEBI:58349"/>
        <dbReference type="ChEBI" id="CHEBI:78442"/>
        <dbReference type="ChEBI" id="CHEBI:78520"/>
        <dbReference type="EC" id="1.2.1.70"/>
    </reaction>
</comment>
<comment type="pathway">
    <text evidence="1">Porphyrin-containing compound metabolism; protoporphyrin-IX biosynthesis; 5-aminolevulinate from L-glutamyl-tRNA(Glu): step 1/2.</text>
</comment>
<comment type="subunit">
    <text evidence="1">Homodimer.</text>
</comment>
<comment type="domain">
    <text evidence="1">Possesses an unusual extended V-shaped dimeric structure with each monomer consisting of three distinct domains arranged along a curved 'spinal' alpha-helix. The N-terminal catalytic domain specifically recognizes the glutamate moiety of the substrate. The second domain is the NADPH-binding domain, and the third C-terminal domain is responsible for dimerization.</text>
</comment>
<comment type="miscellaneous">
    <text evidence="1">During catalysis, the active site Cys acts as a nucleophile attacking the alpha-carbonyl group of tRNA-bound glutamate with the formation of a thioester intermediate between enzyme and glutamate, and the concomitant release of tRNA(Glu). The thioester intermediate is finally reduced by direct hydride transfer from NADPH, to form the product GSA.</text>
</comment>
<comment type="similarity">
    <text evidence="1">Belongs to the glutamyl-tRNA reductase family.</text>
</comment>
<keyword id="KW-0521">NADP</keyword>
<keyword id="KW-0560">Oxidoreductase</keyword>
<keyword id="KW-0627">Porphyrin biosynthesis</keyword>
<reference key="1">
    <citation type="submission" date="2007-06" db="EMBL/GenBank/DDBJ databases">
        <title>Complete sequence of Methanococcus maripaludis C7.</title>
        <authorList>
            <consortium name="US DOE Joint Genome Institute"/>
            <person name="Copeland A."/>
            <person name="Lucas S."/>
            <person name="Lapidus A."/>
            <person name="Barry K."/>
            <person name="Glavina del Rio T."/>
            <person name="Dalin E."/>
            <person name="Tice H."/>
            <person name="Pitluck S."/>
            <person name="Clum A."/>
            <person name="Schmutz J."/>
            <person name="Larimer F."/>
            <person name="Land M."/>
            <person name="Hauser L."/>
            <person name="Kyrpides N."/>
            <person name="Anderson I."/>
            <person name="Sieprawska-Lupa M."/>
            <person name="Whitman W.B."/>
            <person name="Richardson P."/>
        </authorList>
    </citation>
    <scope>NUCLEOTIDE SEQUENCE [LARGE SCALE GENOMIC DNA]</scope>
    <source>
        <strain>C7 / ATCC BAA-1331</strain>
    </source>
</reference>
<proteinExistence type="inferred from homology"/>
<sequence length="382" mass="43779">MLVVKADYKKYPIPVLEKMRIDEDEFYKKYEACVVVQTCNRIEAYFDTEVNSNVDDILKDFQGFDILKGKNATFHFLKVSCGMDSMILGENQILGQIKTSFQKAREFKKTSRYLDSLFLKAIHVGQRARTETKINEGGVSIGSAAVELAEKNFGLTNRNVLLIGAGEIGTLVAKALVEKHIKAVIVANRTYERAETLAKELKGMAVHFDKLREAVNFSDVIICATSSPHYILEKEDLIDVGNKIIIDIANPRDVDDSVRELENIELYTIDDLRNISDKNLQRRIEEIPTVEKIIEEEYDVLMKQIEKINVEEVLKEFNTYIEEIRVKELEKAIKLSKSKDPEEIMENFSKAFAKRITHDFVSYSLNTSKEDLMNSAWWKNGK</sequence>
<organism>
    <name type="scientific">Methanococcus maripaludis (strain C7 / ATCC BAA-1331)</name>
    <dbReference type="NCBI Taxonomy" id="426368"/>
    <lineage>
        <taxon>Archaea</taxon>
        <taxon>Methanobacteriati</taxon>
        <taxon>Methanobacteriota</taxon>
        <taxon>Methanomada group</taxon>
        <taxon>Methanococci</taxon>
        <taxon>Methanococcales</taxon>
        <taxon>Methanococcaceae</taxon>
        <taxon>Methanococcus</taxon>
    </lineage>
</organism>
<accession>A6VI77</accession>
<protein>
    <recommendedName>
        <fullName evidence="1">Glutamyl-tRNA reductase</fullName>
        <shortName evidence="1">GluTR</shortName>
        <ecNumber evidence="1">1.2.1.70</ecNumber>
    </recommendedName>
</protein>
<dbReference type="EC" id="1.2.1.70" evidence="1"/>
<dbReference type="EMBL" id="CP000745">
    <property type="protein sequence ID" value="ABR66153.1"/>
    <property type="molecule type" value="Genomic_DNA"/>
</dbReference>
<dbReference type="SMR" id="A6VI77"/>
<dbReference type="STRING" id="426368.MmarC7_1087"/>
<dbReference type="KEGG" id="mmz:MmarC7_1087"/>
<dbReference type="eggNOG" id="arCOG01036">
    <property type="taxonomic scope" value="Archaea"/>
</dbReference>
<dbReference type="HOGENOM" id="CLU_035113_0_0_2"/>
<dbReference type="OrthoDB" id="4562at2157"/>
<dbReference type="UniPathway" id="UPA00251">
    <property type="reaction ID" value="UER00316"/>
</dbReference>
<dbReference type="GO" id="GO:0008883">
    <property type="term" value="F:glutamyl-tRNA reductase activity"/>
    <property type="evidence" value="ECO:0007669"/>
    <property type="project" value="UniProtKB-UniRule"/>
</dbReference>
<dbReference type="GO" id="GO:0050661">
    <property type="term" value="F:NADP binding"/>
    <property type="evidence" value="ECO:0007669"/>
    <property type="project" value="InterPro"/>
</dbReference>
<dbReference type="GO" id="GO:0019353">
    <property type="term" value="P:protoporphyrinogen IX biosynthetic process from glutamate"/>
    <property type="evidence" value="ECO:0007669"/>
    <property type="project" value="TreeGrafter"/>
</dbReference>
<dbReference type="CDD" id="cd05213">
    <property type="entry name" value="NAD_bind_Glutamyl_tRNA_reduct"/>
    <property type="match status" value="1"/>
</dbReference>
<dbReference type="FunFam" id="3.40.50.720:FF:000031">
    <property type="entry name" value="Glutamyl-tRNA reductase"/>
    <property type="match status" value="1"/>
</dbReference>
<dbReference type="Gene3D" id="1.10.1200.70">
    <property type="entry name" value="Glutamyl tRNA-reductase dimerization domain"/>
    <property type="match status" value="1"/>
</dbReference>
<dbReference type="Gene3D" id="3.30.460.30">
    <property type="entry name" value="Glutamyl-tRNA reductase, N-terminal domain"/>
    <property type="match status" value="1"/>
</dbReference>
<dbReference type="Gene3D" id="3.40.50.720">
    <property type="entry name" value="NAD(P)-binding Rossmann-like Domain"/>
    <property type="match status" value="1"/>
</dbReference>
<dbReference type="HAMAP" id="MF_00087">
    <property type="entry name" value="Glu_tRNA_reductase"/>
    <property type="match status" value="1"/>
</dbReference>
<dbReference type="InterPro" id="IPR000343">
    <property type="entry name" value="4pyrrol_synth_GluRdtase"/>
</dbReference>
<dbReference type="InterPro" id="IPR015896">
    <property type="entry name" value="4pyrrol_synth_GluRdtase_dimer"/>
</dbReference>
<dbReference type="InterPro" id="IPR015895">
    <property type="entry name" value="4pyrrol_synth_GluRdtase_N"/>
</dbReference>
<dbReference type="InterPro" id="IPR018214">
    <property type="entry name" value="GluRdtase_CS"/>
</dbReference>
<dbReference type="InterPro" id="IPR036453">
    <property type="entry name" value="GluRdtase_dimer_dom_sf"/>
</dbReference>
<dbReference type="InterPro" id="IPR036343">
    <property type="entry name" value="GluRdtase_N_sf"/>
</dbReference>
<dbReference type="InterPro" id="IPR036291">
    <property type="entry name" value="NAD(P)-bd_dom_sf"/>
</dbReference>
<dbReference type="InterPro" id="IPR006151">
    <property type="entry name" value="Shikm_DH/Glu-tRNA_Rdtase"/>
</dbReference>
<dbReference type="NCBIfam" id="TIGR01035">
    <property type="entry name" value="hemA"/>
    <property type="match status" value="1"/>
</dbReference>
<dbReference type="PANTHER" id="PTHR43013">
    <property type="entry name" value="GLUTAMYL-TRNA REDUCTASE"/>
    <property type="match status" value="1"/>
</dbReference>
<dbReference type="PANTHER" id="PTHR43013:SF1">
    <property type="entry name" value="GLUTAMYL-TRNA REDUCTASE"/>
    <property type="match status" value="1"/>
</dbReference>
<dbReference type="Pfam" id="PF00745">
    <property type="entry name" value="GlutR_dimer"/>
    <property type="match status" value="1"/>
</dbReference>
<dbReference type="Pfam" id="PF05201">
    <property type="entry name" value="GlutR_N"/>
    <property type="match status" value="1"/>
</dbReference>
<dbReference type="Pfam" id="PF01488">
    <property type="entry name" value="Shikimate_DH"/>
    <property type="match status" value="1"/>
</dbReference>
<dbReference type="PIRSF" id="PIRSF000445">
    <property type="entry name" value="4pyrrol_synth_GluRdtase"/>
    <property type="match status" value="1"/>
</dbReference>
<dbReference type="SUPFAM" id="SSF69742">
    <property type="entry name" value="Glutamyl tRNA-reductase catalytic, N-terminal domain"/>
    <property type="match status" value="1"/>
</dbReference>
<dbReference type="SUPFAM" id="SSF69075">
    <property type="entry name" value="Glutamyl tRNA-reductase dimerization domain"/>
    <property type="match status" value="1"/>
</dbReference>
<dbReference type="SUPFAM" id="SSF51735">
    <property type="entry name" value="NAD(P)-binding Rossmann-fold domains"/>
    <property type="match status" value="1"/>
</dbReference>
<dbReference type="PROSITE" id="PS00747">
    <property type="entry name" value="GLUTR"/>
    <property type="match status" value="1"/>
</dbReference>